<reference key="1">
    <citation type="journal article" date="2003" name="Science">
        <title>Human chromosome 7: DNA sequence and biology.</title>
        <authorList>
            <person name="Scherer S.W."/>
            <person name="Cheung J."/>
            <person name="MacDonald J.R."/>
            <person name="Osborne L.R."/>
            <person name="Nakabayashi K."/>
            <person name="Herbrick J.-A."/>
            <person name="Carson A.R."/>
            <person name="Parker-Katiraee L."/>
            <person name="Skaug J."/>
            <person name="Khaja R."/>
            <person name="Zhang J."/>
            <person name="Hudek A.K."/>
            <person name="Li M."/>
            <person name="Haddad M."/>
            <person name="Duggan G.E."/>
            <person name="Fernandez B.A."/>
            <person name="Kanematsu E."/>
            <person name="Gentles S."/>
            <person name="Christopoulos C.C."/>
            <person name="Choufani S."/>
            <person name="Kwasnicka D."/>
            <person name="Zheng X.H."/>
            <person name="Lai Z."/>
            <person name="Nusskern D.R."/>
            <person name="Zhang Q."/>
            <person name="Gu Z."/>
            <person name="Lu F."/>
            <person name="Zeesman S."/>
            <person name="Nowaczyk M.J."/>
            <person name="Teshima I."/>
            <person name="Chitayat D."/>
            <person name="Shuman C."/>
            <person name="Weksberg R."/>
            <person name="Zackai E.H."/>
            <person name="Grebe T.A."/>
            <person name="Cox S.R."/>
            <person name="Kirkpatrick S.J."/>
            <person name="Rahman N."/>
            <person name="Friedman J.M."/>
            <person name="Heng H.H.Q."/>
            <person name="Pelicci P.G."/>
            <person name="Lo-Coco F."/>
            <person name="Belloni E."/>
            <person name="Shaffer L.G."/>
            <person name="Pober B."/>
            <person name="Morton C.C."/>
            <person name="Gusella J.F."/>
            <person name="Bruns G.A.P."/>
            <person name="Korf B.R."/>
            <person name="Quade B.J."/>
            <person name="Ligon A.H."/>
            <person name="Ferguson H."/>
            <person name="Higgins A.W."/>
            <person name="Leach N.T."/>
            <person name="Herrick S.R."/>
            <person name="Lemyre E."/>
            <person name="Farra C.G."/>
            <person name="Kim H.-G."/>
            <person name="Summers A.M."/>
            <person name="Gripp K.W."/>
            <person name="Roberts W."/>
            <person name="Szatmari P."/>
            <person name="Winsor E.J.T."/>
            <person name="Grzeschik K.-H."/>
            <person name="Teebi A."/>
            <person name="Minassian B.A."/>
            <person name="Kere J."/>
            <person name="Armengol L."/>
            <person name="Pujana M.A."/>
            <person name="Estivill X."/>
            <person name="Wilson M.D."/>
            <person name="Koop B.F."/>
            <person name="Tosi S."/>
            <person name="Moore G.E."/>
            <person name="Boright A.P."/>
            <person name="Zlotorynski E."/>
            <person name="Kerem B."/>
            <person name="Kroisel P.M."/>
            <person name="Petek E."/>
            <person name="Oscier D.G."/>
            <person name="Mould S.J."/>
            <person name="Doehner H."/>
            <person name="Doehner K."/>
            <person name="Rommens J.M."/>
            <person name="Vincent J.B."/>
            <person name="Venter J.C."/>
            <person name="Li P.W."/>
            <person name="Mural R.J."/>
            <person name="Adams M.D."/>
            <person name="Tsui L.-C."/>
        </authorList>
    </citation>
    <scope>NUCLEOTIDE SEQUENCE [LARGE SCALE GENOMIC DNA]</scope>
</reference>
<reference key="2">
    <citation type="submission" date="2005-07" db="EMBL/GenBank/DDBJ databases">
        <authorList>
            <person name="Mural R.J."/>
            <person name="Istrail S."/>
            <person name="Sutton G.G."/>
            <person name="Florea L."/>
            <person name="Halpern A.L."/>
            <person name="Mobarry C.M."/>
            <person name="Lippert R."/>
            <person name="Walenz B."/>
            <person name="Shatkay H."/>
            <person name="Dew I."/>
            <person name="Miller J.R."/>
            <person name="Flanigan M.J."/>
            <person name="Edwards N.J."/>
            <person name="Bolanos R."/>
            <person name="Fasulo D."/>
            <person name="Halldorsson B.V."/>
            <person name="Hannenhalli S."/>
            <person name="Turner R."/>
            <person name="Yooseph S."/>
            <person name="Lu F."/>
            <person name="Nusskern D.R."/>
            <person name="Shue B.C."/>
            <person name="Zheng X.H."/>
            <person name="Zhong F."/>
            <person name="Delcher A.L."/>
            <person name="Huson D.H."/>
            <person name="Kravitz S.A."/>
            <person name="Mouchard L."/>
            <person name="Reinert K."/>
            <person name="Remington K.A."/>
            <person name="Clark A.G."/>
            <person name="Waterman M.S."/>
            <person name="Eichler E.E."/>
            <person name="Adams M.D."/>
            <person name="Hunkapiller M.W."/>
            <person name="Myers E.W."/>
            <person name="Venter J.C."/>
        </authorList>
    </citation>
    <scope>NUCLEOTIDE SEQUENCE [LARGE SCALE GENOMIC DNA]</scope>
</reference>
<reference key="3">
    <citation type="journal article" date="2004" name="Genome Res.">
        <title>The status, quality, and expansion of the NIH full-length cDNA project: the Mammalian Gene Collection (MGC).</title>
        <authorList>
            <consortium name="The MGC Project Team"/>
        </authorList>
    </citation>
    <scope>NUCLEOTIDE SEQUENCE [LARGE SCALE MRNA]</scope>
    <scope>VARIANT LEU-53</scope>
    <source>
        <tissue>Brain</tissue>
    </source>
</reference>
<sequence>MEFPDLGKHCSEKTCKQLDFLPVKCDACKQDFCKDHFPYAAHKCPFAFQKDVHVPVCPLCNTPIPVKKGQIPDVVVGDHIDRDCDSHPGKKKEKIFTYRCSKEGCKKKEMLQMVCAQCHGNFCIQHRHPLDHSCRHGSRPTIKAG</sequence>
<organism>
    <name type="scientific">Homo sapiens</name>
    <name type="common">Human</name>
    <dbReference type="NCBI Taxonomy" id="9606"/>
    <lineage>
        <taxon>Eukaryota</taxon>
        <taxon>Metazoa</taxon>
        <taxon>Chordata</taxon>
        <taxon>Craniata</taxon>
        <taxon>Vertebrata</taxon>
        <taxon>Euteleostomi</taxon>
        <taxon>Mammalia</taxon>
        <taxon>Eutheria</taxon>
        <taxon>Euarchontoglires</taxon>
        <taxon>Primates</taxon>
        <taxon>Haplorrhini</taxon>
        <taxon>Catarrhini</taxon>
        <taxon>Hominidae</taxon>
        <taxon>Homo</taxon>
    </lineage>
</organism>
<comment type="interaction">
    <interactant intactId="EBI-3921109">
        <id>Q8N6M9</id>
    </interactant>
    <interactant intactId="EBI-724310">
        <id>Q15038</id>
        <label>DAZAP2</label>
    </interactant>
    <organismsDiffer>false</organismsDiffer>
    <experiments>3</experiments>
</comment>
<comment type="interaction">
    <interactant intactId="EBI-3921109">
        <id>Q8N6M9</id>
    </interactant>
    <interactant intactId="EBI-373552">
        <id>Q96CS7</id>
        <label>PLEKHB2</label>
    </interactant>
    <organismsDiffer>false</organismsDiffer>
    <experiments>3</experiments>
</comment>
<comment type="interaction">
    <interactant intactId="EBI-3921109">
        <id>Q8N6M9</id>
    </interactant>
    <interactant intactId="EBI-723313">
        <id>Q9NWF9</id>
        <label>RNF216</label>
    </interactant>
    <organismsDiffer>false</organismsDiffer>
    <experiments>3</experiments>
</comment>
<comment type="interaction">
    <interactant intactId="EBI-3921109">
        <id>Q8N6M9</id>
    </interactant>
    <interactant intactId="EBI-740098">
        <id>P36406</id>
        <label>TRIM23</label>
    </interactant>
    <organismsDiffer>false</organismsDiffer>
    <experiments>3</experiments>
</comment>
<comment type="interaction">
    <interactant intactId="EBI-3921109">
        <id>Q8N6M9</id>
    </interactant>
    <interactant intactId="EBI-947187">
        <id>Q9UHD9</id>
        <label>UBQLN2</label>
    </interactant>
    <organismsDiffer>false</organismsDiffer>
    <experiments>3</experiments>
</comment>
<comment type="subcellular location">
    <subcellularLocation>
        <location evidence="1">Cytoplasm</location>
    </subcellularLocation>
    <subcellularLocation>
        <location evidence="1">Nucleus</location>
    </subcellularLocation>
</comment>
<proteinExistence type="evidence at protein level"/>
<gene>
    <name type="primary">ZFAND2A</name>
</gene>
<evidence type="ECO:0000250" key="1"/>
<evidence type="ECO:0000255" key="2">
    <source>
        <dbReference type="PROSITE-ProRule" id="PRU00449"/>
    </source>
</evidence>
<evidence type="ECO:0000269" key="3">
    <source>
    </source>
</evidence>
<name>ZFN2A_HUMAN</name>
<protein>
    <recommendedName>
        <fullName>AN1-type zinc finger protein 2A</fullName>
    </recommendedName>
</protein>
<keyword id="KW-0963">Cytoplasm</keyword>
<keyword id="KW-0479">Metal-binding</keyword>
<keyword id="KW-0539">Nucleus</keyword>
<keyword id="KW-1267">Proteomics identification</keyword>
<keyword id="KW-1185">Reference proteome</keyword>
<keyword id="KW-0677">Repeat</keyword>
<keyword id="KW-0862">Zinc</keyword>
<keyword id="KW-0863">Zinc-finger</keyword>
<dbReference type="EMBL" id="CH236953">
    <property type="protein sequence ID" value="EAL23939.1"/>
    <property type="molecule type" value="Genomic_DNA"/>
</dbReference>
<dbReference type="EMBL" id="CH471144">
    <property type="protein sequence ID" value="EAW87196.1"/>
    <property type="molecule type" value="Genomic_DNA"/>
</dbReference>
<dbReference type="EMBL" id="BC029558">
    <property type="protein sequence ID" value="AAH29558.1"/>
    <property type="molecule type" value="mRNA"/>
</dbReference>
<dbReference type="CCDS" id="CCDS5323.1"/>
<dbReference type="RefSeq" id="NP_872297.2">
    <property type="nucleotide sequence ID" value="NM_182491.4"/>
</dbReference>
<dbReference type="SMR" id="Q8N6M9"/>
<dbReference type="BioGRID" id="124747">
    <property type="interactions" value="28"/>
</dbReference>
<dbReference type="FunCoup" id="Q8N6M9">
    <property type="interactions" value="532"/>
</dbReference>
<dbReference type="IntAct" id="Q8N6M9">
    <property type="interactions" value="20"/>
</dbReference>
<dbReference type="STRING" id="9606.ENSP00000314619"/>
<dbReference type="iPTMnet" id="Q8N6M9"/>
<dbReference type="PhosphoSitePlus" id="Q8N6M9"/>
<dbReference type="BioMuta" id="ZFAND2A"/>
<dbReference type="DMDM" id="229462785"/>
<dbReference type="MassIVE" id="Q8N6M9"/>
<dbReference type="PaxDb" id="9606-ENSP00000314619"/>
<dbReference type="PeptideAtlas" id="Q8N6M9"/>
<dbReference type="ProteomicsDB" id="72201"/>
<dbReference type="Antibodypedia" id="10898">
    <property type="antibodies" value="95 antibodies from 17 providers"/>
</dbReference>
<dbReference type="DNASU" id="90637"/>
<dbReference type="Ensembl" id="ENST00000316495.8">
    <property type="protein sequence ID" value="ENSP00000314619.3"/>
    <property type="gene ID" value="ENSG00000178381.13"/>
</dbReference>
<dbReference type="GeneID" id="90637"/>
<dbReference type="KEGG" id="hsa:90637"/>
<dbReference type="MANE-Select" id="ENST00000316495.8">
    <property type="protein sequence ID" value="ENSP00000314619.3"/>
    <property type="RefSeq nucleotide sequence ID" value="NM_182491.4"/>
    <property type="RefSeq protein sequence ID" value="NP_872297.2"/>
</dbReference>
<dbReference type="UCSC" id="uc003skc.4">
    <property type="organism name" value="human"/>
</dbReference>
<dbReference type="AGR" id="HGNC:28073"/>
<dbReference type="CTD" id="90637"/>
<dbReference type="DisGeNET" id="90637"/>
<dbReference type="GeneCards" id="ZFAND2A"/>
<dbReference type="HGNC" id="HGNC:28073">
    <property type="gene designation" value="ZFAND2A"/>
</dbReference>
<dbReference type="HPA" id="ENSG00000178381">
    <property type="expression patterns" value="Low tissue specificity"/>
</dbReference>
<dbReference type="MIM" id="610699">
    <property type="type" value="gene"/>
</dbReference>
<dbReference type="neXtProt" id="NX_Q8N6M9"/>
<dbReference type="OpenTargets" id="ENSG00000178381"/>
<dbReference type="PharmGKB" id="PA142670526"/>
<dbReference type="VEuPathDB" id="HostDB:ENSG00000178381"/>
<dbReference type="eggNOG" id="KOG3183">
    <property type="taxonomic scope" value="Eukaryota"/>
</dbReference>
<dbReference type="GeneTree" id="ENSGT00940000161571"/>
<dbReference type="HOGENOM" id="CLU_061621_3_0_1"/>
<dbReference type="InParanoid" id="Q8N6M9"/>
<dbReference type="OMA" id="YKSHECP"/>
<dbReference type="OrthoDB" id="431929at2759"/>
<dbReference type="PAN-GO" id="Q8N6M9">
    <property type="GO annotations" value="4 GO annotations based on evolutionary models"/>
</dbReference>
<dbReference type="PhylomeDB" id="Q8N6M9"/>
<dbReference type="TreeFam" id="TF314219"/>
<dbReference type="PathwayCommons" id="Q8N6M9"/>
<dbReference type="SignaLink" id="Q8N6M9"/>
<dbReference type="BioGRID-ORCS" id="90637">
    <property type="hits" value="12 hits in 1158 CRISPR screens"/>
</dbReference>
<dbReference type="ChiTaRS" id="ZFAND2A">
    <property type="organism name" value="human"/>
</dbReference>
<dbReference type="GenomeRNAi" id="90637"/>
<dbReference type="Pharos" id="Q8N6M9">
    <property type="development level" value="Tbio"/>
</dbReference>
<dbReference type="PRO" id="PR:Q8N6M9"/>
<dbReference type="Proteomes" id="UP000005640">
    <property type="component" value="Chromosome 7"/>
</dbReference>
<dbReference type="RNAct" id="Q8N6M9">
    <property type="molecule type" value="protein"/>
</dbReference>
<dbReference type="Bgee" id="ENSG00000178381">
    <property type="expression patterns" value="Expressed in oocyte and 180 other cell types or tissues"/>
</dbReference>
<dbReference type="ExpressionAtlas" id="Q8N6M9">
    <property type="expression patterns" value="baseline and differential"/>
</dbReference>
<dbReference type="GO" id="GO:0005737">
    <property type="term" value="C:cytoplasm"/>
    <property type="evidence" value="ECO:0000318"/>
    <property type="project" value="GO_Central"/>
</dbReference>
<dbReference type="GO" id="GO:0005783">
    <property type="term" value="C:endoplasmic reticulum"/>
    <property type="evidence" value="ECO:0000318"/>
    <property type="project" value="GO_Central"/>
</dbReference>
<dbReference type="GO" id="GO:0005634">
    <property type="term" value="C:nucleus"/>
    <property type="evidence" value="ECO:0007669"/>
    <property type="project" value="UniProtKB-SubCell"/>
</dbReference>
<dbReference type="GO" id="GO:0000502">
    <property type="term" value="C:proteasome complex"/>
    <property type="evidence" value="ECO:0007669"/>
    <property type="project" value="Ensembl"/>
</dbReference>
<dbReference type="GO" id="GO:0008270">
    <property type="term" value="F:zinc ion binding"/>
    <property type="evidence" value="ECO:0007669"/>
    <property type="project" value="UniProtKB-KW"/>
</dbReference>
<dbReference type="GO" id="GO:0071243">
    <property type="term" value="P:cellular response to arsenic-containing substance"/>
    <property type="evidence" value="ECO:0007669"/>
    <property type="project" value="Ensembl"/>
</dbReference>
<dbReference type="GO" id="GO:0032436">
    <property type="term" value="P:positive regulation of proteasomal ubiquitin-dependent protein catabolic process"/>
    <property type="evidence" value="ECO:0007669"/>
    <property type="project" value="Ensembl"/>
</dbReference>
<dbReference type="GO" id="GO:0043161">
    <property type="term" value="P:proteasome-mediated ubiquitin-dependent protein catabolic process"/>
    <property type="evidence" value="ECO:0000318"/>
    <property type="project" value="GO_Central"/>
</dbReference>
<dbReference type="GO" id="GO:0045047">
    <property type="term" value="P:protein targeting to ER"/>
    <property type="evidence" value="ECO:0000318"/>
    <property type="project" value="GO_Central"/>
</dbReference>
<dbReference type="FunFam" id="4.10.1110.10:FF:000003">
    <property type="entry name" value="AN1-type zinc finger protein 2B isoform X1"/>
    <property type="match status" value="1"/>
</dbReference>
<dbReference type="FunFam" id="4.10.1110.10:FF:000004">
    <property type="entry name" value="AN1-type zinc finger protein 2B isoform X1"/>
    <property type="match status" value="1"/>
</dbReference>
<dbReference type="Gene3D" id="4.10.1110.10">
    <property type="entry name" value="AN1-like Zinc finger"/>
    <property type="match status" value="2"/>
</dbReference>
<dbReference type="InterPro" id="IPR035896">
    <property type="entry name" value="AN1-like_Znf"/>
</dbReference>
<dbReference type="InterPro" id="IPR000058">
    <property type="entry name" value="Znf_AN1"/>
</dbReference>
<dbReference type="PANTHER" id="PTHR14677:SF11">
    <property type="entry name" value="AN1-TYPE ZINC FINGER PROTEIN 2A"/>
    <property type="match status" value="1"/>
</dbReference>
<dbReference type="PANTHER" id="PTHR14677">
    <property type="entry name" value="ARSENITE INDUCUBLE RNA ASSOCIATED PROTEIN AIP-1-RELATED"/>
    <property type="match status" value="1"/>
</dbReference>
<dbReference type="Pfam" id="PF01428">
    <property type="entry name" value="zf-AN1"/>
    <property type="match status" value="2"/>
</dbReference>
<dbReference type="Pfam" id="PF25403">
    <property type="entry name" value="zf-C2H2_ZFAND2"/>
    <property type="match status" value="1"/>
</dbReference>
<dbReference type="SMART" id="SM00154">
    <property type="entry name" value="ZnF_AN1"/>
    <property type="match status" value="2"/>
</dbReference>
<dbReference type="SUPFAM" id="SSF118310">
    <property type="entry name" value="AN1-like Zinc finger"/>
    <property type="match status" value="2"/>
</dbReference>
<dbReference type="PROSITE" id="PS51039">
    <property type="entry name" value="ZF_AN1"/>
    <property type="match status" value="2"/>
</dbReference>
<feature type="chain" id="PRO_0000269888" description="AN1-type zinc finger protein 2A">
    <location>
        <begin position="1"/>
        <end position="145"/>
    </location>
</feature>
<feature type="zinc finger region" description="AN1-type 1" evidence="2">
    <location>
        <begin position="4"/>
        <end position="52"/>
    </location>
</feature>
<feature type="zinc finger region" description="AN1-type 2" evidence="2">
    <location>
        <begin position="94"/>
        <end position="142"/>
    </location>
</feature>
<feature type="binding site" evidence="2">
    <location>
        <position position="10"/>
    </location>
    <ligand>
        <name>Zn(2+)</name>
        <dbReference type="ChEBI" id="CHEBI:29105"/>
        <label>1</label>
    </ligand>
</feature>
<feature type="binding site" evidence="2">
    <location>
        <position position="15"/>
    </location>
    <ligand>
        <name>Zn(2+)</name>
        <dbReference type="ChEBI" id="CHEBI:29105"/>
        <label>1</label>
    </ligand>
</feature>
<feature type="binding site" evidence="2">
    <location>
        <position position="25"/>
    </location>
    <ligand>
        <name>Zn(2+)</name>
        <dbReference type="ChEBI" id="CHEBI:29105"/>
        <label>2</label>
    </ligand>
</feature>
<feature type="binding site" evidence="2">
    <location>
        <position position="28"/>
    </location>
    <ligand>
        <name>Zn(2+)</name>
        <dbReference type="ChEBI" id="CHEBI:29105"/>
        <label>2</label>
    </ligand>
</feature>
<feature type="binding site" evidence="2">
    <location>
        <position position="33"/>
    </location>
    <ligand>
        <name>Zn(2+)</name>
        <dbReference type="ChEBI" id="CHEBI:29105"/>
        <label>1</label>
    </ligand>
</feature>
<feature type="binding site" evidence="2">
    <location>
        <position position="36"/>
    </location>
    <ligand>
        <name>Zn(2+)</name>
        <dbReference type="ChEBI" id="CHEBI:29105"/>
        <label>1</label>
    </ligand>
</feature>
<feature type="binding site" evidence="2">
    <location>
        <position position="42"/>
    </location>
    <ligand>
        <name>Zn(2+)</name>
        <dbReference type="ChEBI" id="CHEBI:29105"/>
        <label>2</label>
    </ligand>
</feature>
<feature type="binding site" evidence="2">
    <location>
        <position position="44"/>
    </location>
    <ligand>
        <name>Zn(2+)</name>
        <dbReference type="ChEBI" id="CHEBI:29105"/>
        <label>2</label>
    </ligand>
</feature>
<feature type="binding site" evidence="2">
    <location>
        <position position="100"/>
    </location>
    <ligand>
        <name>Zn(2+)</name>
        <dbReference type="ChEBI" id="CHEBI:29105"/>
        <label>3</label>
    </ligand>
</feature>
<feature type="binding site" evidence="2">
    <location>
        <position position="105"/>
    </location>
    <ligand>
        <name>Zn(2+)</name>
        <dbReference type="ChEBI" id="CHEBI:29105"/>
        <label>3</label>
    </ligand>
</feature>
<feature type="binding site" evidence="2">
    <location>
        <position position="115"/>
    </location>
    <ligand>
        <name>Zn(2+)</name>
        <dbReference type="ChEBI" id="CHEBI:29105"/>
        <label>4</label>
    </ligand>
</feature>
<feature type="binding site" evidence="2">
    <location>
        <position position="118"/>
    </location>
    <ligand>
        <name>Zn(2+)</name>
        <dbReference type="ChEBI" id="CHEBI:29105"/>
        <label>4</label>
    </ligand>
</feature>
<feature type="binding site" evidence="2">
    <location>
        <position position="123"/>
    </location>
    <ligand>
        <name>Zn(2+)</name>
        <dbReference type="ChEBI" id="CHEBI:29105"/>
        <label>3</label>
    </ligand>
</feature>
<feature type="binding site" evidence="2">
    <location>
        <position position="126"/>
    </location>
    <ligand>
        <name>Zn(2+)</name>
        <dbReference type="ChEBI" id="CHEBI:29105"/>
        <label>3</label>
    </ligand>
</feature>
<feature type="binding site" evidence="2">
    <location>
        <position position="132"/>
    </location>
    <ligand>
        <name>Zn(2+)</name>
        <dbReference type="ChEBI" id="CHEBI:29105"/>
        <label>4</label>
    </ligand>
</feature>
<feature type="binding site" evidence="2">
    <location>
        <position position="134"/>
    </location>
    <ligand>
        <name>Zn(2+)</name>
        <dbReference type="ChEBI" id="CHEBI:29105"/>
        <label>4</label>
    </ligand>
</feature>
<feature type="sequence variant" id="VAR_055295" description="In dbSNP:rs17855544." evidence="3">
    <original>H</original>
    <variation>L</variation>
    <location>
        <position position="53"/>
    </location>
</feature>
<accession>Q8N6M9</accession>
<accession>A4D220</accession>